<evidence type="ECO:0000255" key="1">
    <source>
        <dbReference type="HAMAP-Rule" id="MF_01617"/>
    </source>
</evidence>
<keyword id="KW-0963">Cytoplasm</keyword>
<keyword id="KW-0276">Fatty acid metabolism</keyword>
<keyword id="KW-0413">Isomerase</keyword>
<keyword id="KW-0442">Lipid degradation</keyword>
<keyword id="KW-0443">Lipid metabolism</keyword>
<keyword id="KW-0456">Lyase</keyword>
<keyword id="KW-0511">Multifunctional enzyme</keyword>
<keyword id="KW-0520">NAD</keyword>
<keyword id="KW-0560">Oxidoreductase</keyword>
<protein>
    <recommendedName>
        <fullName evidence="1">Fatty acid oxidation complex subunit alpha</fullName>
    </recommendedName>
    <domain>
        <recommendedName>
            <fullName evidence="1">Enoyl-CoA hydratase/3-hydroxybutyryl-CoA epimerase</fullName>
            <ecNumber evidence="1">4.2.1.17</ecNumber>
            <ecNumber evidence="1">5.1.2.3</ecNumber>
        </recommendedName>
    </domain>
    <domain>
        <recommendedName>
            <fullName evidence="1">3-hydroxyacyl-CoA dehydrogenase</fullName>
            <ecNumber evidence="1">1.1.1.35</ecNumber>
        </recommendedName>
    </domain>
</protein>
<dbReference type="EC" id="4.2.1.17" evidence="1"/>
<dbReference type="EC" id="5.1.2.3" evidence="1"/>
<dbReference type="EC" id="1.1.1.35" evidence="1"/>
<dbReference type="EMBL" id="CP000931">
    <property type="protein sequence ID" value="ABZ77223.1"/>
    <property type="molecule type" value="Genomic_DNA"/>
</dbReference>
<dbReference type="SMR" id="B0TL21"/>
<dbReference type="STRING" id="458817.Shal_2670"/>
<dbReference type="KEGG" id="shl:Shal_2670"/>
<dbReference type="eggNOG" id="COG1024">
    <property type="taxonomic scope" value="Bacteria"/>
</dbReference>
<dbReference type="eggNOG" id="COG1250">
    <property type="taxonomic scope" value="Bacteria"/>
</dbReference>
<dbReference type="HOGENOM" id="CLU_009834_16_1_6"/>
<dbReference type="UniPathway" id="UPA00659"/>
<dbReference type="Proteomes" id="UP000001317">
    <property type="component" value="Chromosome"/>
</dbReference>
<dbReference type="GO" id="GO:0005737">
    <property type="term" value="C:cytoplasm"/>
    <property type="evidence" value="ECO:0007669"/>
    <property type="project" value="UniProtKB-SubCell"/>
</dbReference>
<dbReference type="GO" id="GO:0008692">
    <property type="term" value="F:3-hydroxybutyryl-CoA epimerase activity"/>
    <property type="evidence" value="ECO:0007669"/>
    <property type="project" value="UniProtKB-UniRule"/>
</dbReference>
<dbReference type="GO" id="GO:0004300">
    <property type="term" value="F:enoyl-CoA hydratase activity"/>
    <property type="evidence" value="ECO:0007669"/>
    <property type="project" value="UniProtKB-UniRule"/>
</dbReference>
<dbReference type="GO" id="GO:0016509">
    <property type="term" value="F:long-chain-3-hydroxyacyl-CoA dehydrogenase activity"/>
    <property type="evidence" value="ECO:0007669"/>
    <property type="project" value="TreeGrafter"/>
</dbReference>
<dbReference type="GO" id="GO:0070403">
    <property type="term" value="F:NAD+ binding"/>
    <property type="evidence" value="ECO:0007669"/>
    <property type="project" value="InterPro"/>
</dbReference>
<dbReference type="GO" id="GO:0006635">
    <property type="term" value="P:fatty acid beta-oxidation"/>
    <property type="evidence" value="ECO:0007669"/>
    <property type="project" value="UniProtKB-UniRule"/>
</dbReference>
<dbReference type="CDD" id="cd06558">
    <property type="entry name" value="crotonase-like"/>
    <property type="match status" value="1"/>
</dbReference>
<dbReference type="FunFam" id="3.90.226.10:FF:000011">
    <property type="entry name" value="Fatty acid oxidation complex subunit alpha"/>
    <property type="match status" value="1"/>
</dbReference>
<dbReference type="FunFam" id="3.40.50.720:FF:000009">
    <property type="entry name" value="Fatty oxidation complex, alpha subunit"/>
    <property type="match status" value="1"/>
</dbReference>
<dbReference type="Gene3D" id="1.10.1040.50">
    <property type="match status" value="1"/>
</dbReference>
<dbReference type="Gene3D" id="3.90.226.10">
    <property type="entry name" value="2-enoyl-CoA Hydratase, Chain A, domain 1"/>
    <property type="match status" value="1"/>
</dbReference>
<dbReference type="Gene3D" id="3.40.50.720">
    <property type="entry name" value="NAD(P)-binding Rossmann-like Domain"/>
    <property type="match status" value="1"/>
</dbReference>
<dbReference type="HAMAP" id="MF_01617">
    <property type="entry name" value="FadJ"/>
    <property type="match status" value="1"/>
</dbReference>
<dbReference type="InterPro" id="IPR006176">
    <property type="entry name" value="3-OHacyl-CoA_DH_NAD-bd"/>
</dbReference>
<dbReference type="InterPro" id="IPR006108">
    <property type="entry name" value="3HC_DH_C"/>
</dbReference>
<dbReference type="InterPro" id="IPR008927">
    <property type="entry name" value="6-PGluconate_DH-like_C_sf"/>
</dbReference>
<dbReference type="InterPro" id="IPR029045">
    <property type="entry name" value="ClpP/crotonase-like_dom_sf"/>
</dbReference>
<dbReference type="InterPro" id="IPR001753">
    <property type="entry name" value="Enoyl-CoA_hydra/iso"/>
</dbReference>
<dbReference type="InterPro" id="IPR050136">
    <property type="entry name" value="FA_oxidation_alpha_subunit"/>
</dbReference>
<dbReference type="InterPro" id="IPR012802">
    <property type="entry name" value="FadJ"/>
</dbReference>
<dbReference type="InterPro" id="IPR036291">
    <property type="entry name" value="NAD(P)-bd_dom_sf"/>
</dbReference>
<dbReference type="NCBIfam" id="TIGR02440">
    <property type="entry name" value="FadJ"/>
    <property type="match status" value="1"/>
</dbReference>
<dbReference type="NCBIfam" id="NF008363">
    <property type="entry name" value="PRK11154.1"/>
    <property type="match status" value="1"/>
</dbReference>
<dbReference type="PANTHER" id="PTHR43612">
    <property type="entry name" value="TRIFUNCTIONAL ENZYME SUBUNIT ALPHA"/>
    <property type="match status" value="1"/>
</dbReference>
<dbReference type="PANTHER" id="PTHR43612:SF3">
    <property type="entry name" value="TRIFUNCTIONAL ENZYME SUBUNIT ALPHA, MITOCHONDRIAL"/>
    <property type="match status" value="1"/>
</dbReference>
<dbReference type="Pfam" id="PF00725">
    <property type="entry name" value="3HCDH"/>
    <property type="match status" value="2"/>
</dbReference>
<dbReference type="Pfam" id="PF02737">
    <property type="entry name" value="3HCDH_N"/>
    <property type="match status" value="1"/>
</dbReference>
<dbReference type="Pfam" id="PF00378">
    <property type="entry name" value="ECH_1"/>
    <property type="match status" value="1"/>
</dbReference>
<dbReference type="SUPFAM" id="SSF48179">
    <property type="entry name" value="6-phosphogluconate dehydrogenase C-terminal domain-like"/>
    <property type="match status" value="2"/>
</dbReference>
<dbReference type="SUPFAM" id="SSF52096">
    <property type="entry name" value="ClpP/crotonase"/>
    <property type="match status" value="1"/>
</dbReference>
<dbReference type="SUPFAM" id="SSF51735">
    <property type="entry name" value="NAD(P)-binding Rossmann-fold domains"/>
    <property type="match status" value="1"/>
</dbReference>
<sequence>MDMEKTFNLTRRDDGIAILTMDVPGETMNTLRSEFGPEISDVLAEIKADTSIKGLVLVSGKKDSFVAGADISMLDACETATDAKQLSQQGHVVFNELESLPIPVVAAINGACLGGGLELALACHKRVCSLNPKTMMGVPEVQLGLLPGGGGTQRLPRLVGVTTALDMMLTGKQLRPKQALKMGLVDDAVPESILLRTAVEMALAGKRPAKKKHQSFFNKVLEGTSAGRNIIFDQAGKQVAKKTQGNYPAPAKIIDCVRQGMTKGMAKGLEVEASHFADLVMSKESGAMRSVFFATTEMKKETGAGDVEPQKVNKVMVLGGGLMGGGIASVTTTKAKIPARVKDISETGLSNALAYAYKLLDKGVKRRHMTPAVRDNLMALMTTTTEYKGIKDADIVVEAVFEDLALKHQMVKDVERECGEHTIFASNTSSLPIGQIAEAASRPENVIGLHYFSPVEKMPLVEVIAHEKTSAETIATTVAFAKKQGKTPIVVQDGAGFYVNRILALYMNEAAQLLLEGQSVEHLDKALIKFGFPVGPMTLLDEVGIDVGAKISPILEKELGERFKAPTAFDKLLADDRKGRKNGKGFYLYGGKKKAKEVDQTVYSVLGLKPGVDTEATEVAQRCVVQMLNEAVRCLEESIIACPRDGDIGAIFGIGFPPFLGGPFHYIDTLGAANLVKILENYQSRYGSRFEPAAKLKQMAEEGTRFFS</sequence>
<feature type="chain" id="PRO_1000088063" description="Fatty acid oxidation complex subunit alpha">
    <location>
        <begin position="1"/>
        <end position="708"/>
    </location>
</feature>
<feature type="region of interest" description="Enoyl-CoA hydratase" evidence="1">
    <location>
        <begin position="1"/>
        <end position="190"/>
    </location>
</feature>
<feature type="region of interest" description="3-hydroxyacyl-CoA dehydrogenase" evidence="1">
    <location>
        <begin position="310"/>
        <end position="708"/>
    </location>
</feature>
<feature type="site" description="Important for catalytic activity" evidence="1">
    <location>
        <position position="118"/>
    </location>
</feature>
<feature type="site" description="Important for catalytic activity" evidence="1">
    <location>
        <position position="140"/>
    </location>
</feature>
<organism>
    <name type="scientific">Shewanella halifaxensis (strain HAW-EB4)</name>
    <dbReference type="NCBI Taxonomy" id="458817"/>
    <lineage>
        <taxon>Bacteria</taxon>
        <taxon>Pseudomonadati</taxon>
        <taxon>Pseudomonadota</taxon>
        <taxon>Gammaproteobacteria</taxon>
        <taxon>Alteromonadales</taxon>
        <taxon>Shewanellaceae</taxon>
        <taxon>Shewanella</taxon>
    </lineage>
</organism>
<accession>B0TL21</accession>
<proteinExistence type="inferred from homology"/>
<comment type="function">
    <text evidence="1">Catalyzes the formation of a hydroxyacyl-CoA by addition of water on enoyl-CoA. Also exhibits 3-hydroxyacyl-CoA epimerase and 3-hydroxyacyl-CoA dehydrogenase activities.</text>
</comment>
<comment type="catalytic activity">
    <reaction evidence="1">
        <text>a (3S)-3-hydroxyacyl-CoA = a (2E)-enoyl-CoA + H2O</text>
        <dbReference type="Rhea" id="RHEA:16105"/>
        <dbReference type="ChEBI" id="CHEBI:15377"/>
        <dbReference type="ChEBI" id="CHEBI:57318"/>
        <dbReference type="ChEBI" id="CHEBI:58856"/>
        <dbReference type="EC" id="4.2.1.17"/>
    </reaction>
</comment>
<comment type="catalytic activity">
    <reaction evidence="1">
        <text>a 4-saturated-(3S)-3-hydroxyacyl-CoA = a (3E)-enoyl-CoA + H2O</text>
        <dbReference type="Rhea" id="RHEA:20724"/>
        <dbReference type="ChEBI" id="CHEBI:15377"/>
        <dbReference type="ChEBI" id="CHEBI:58521"/>
        <dbReference type="ChEBI" id="CHEBI:137480"/>
        <dbReference type="EC" id="4.2.1.17"/>
    </reaction>
</comment>
<comment type="catalytic activity">
    <reaction evidence="1">
        <text>a (3S)-3-hydroxyacyl-CoA + NAD(+) = a 3-oxoacyl-CoA + NADH + H(+)</text>
        <dbReference type="Rhea" id="RHEA:22432"/>
        <dbReference type="ChEBI" id="CHEBI:15378"/>
        <dbReference type="ChEBI" id="CHEBI:57318"/>
        <dbReference type="ChEBI" id="CHEBI:57540"/>
        <dbReference type="ChEBI" id="CHEBI:57945"/>
        <dbReference type="ChEBI" id="CHEBI:90726"/>
        <dbReference type="EC" id="1.1.1.35"/>
    </reaction>
</comment>
<comment type="catalytic activity">
    <reaction evidence="1">
        <text>(3S)-3-hydroxybutanoyl-CoA = (3R)-3-hydroxybutanoyl-CoA</text>
        <dbReference type="Rhea" id="RHEA:21760"/>
        <dbReference type="ChEBI" id="CHEBI:57315"/>
        <dbReference type="ChEBI" id="CHEBI:57316"/>
        <dbReference type="EC" id="5.1.2.3"/>
    </reaction>
</comment>
<comment type="pathway">
    <text evidence="1">Lipid metabolism; fatty acid beta-oxidation.</text>
</comment>
<comment type="subunit">
    <text evidence="1">Heterotetramer of two alpha chains (FadJ) and two beta chains (FadI).</text>
</comment>
<comment type="subcellular location">
    <subcellularLocation>
        <location evidence="1">Cytoplasm</location>
    </subcellularLocation>
</comment>
<comment type="similarity">
    <text evidence="1">In the N-terminal section; belongs to the enoyl-CoA hydratase/isomerase family.</text>
</comment>
<comment type="similarity">
    <text evidence="1">In the central section; belongs to the 3-hydroxyacyl-CoA dehydrogenase family.</text>
</comment>
<name>FADJ_SHEHH</name>
<reference key="1">
    <citation type="submission" date="2008-01" db="EMBL/GenBank/DDBJ databases">
        <title>Complete sequence of Shewanella halifaxensis HAW-EB4.</title>
        <authorList>
            <consortium name="US DOE Joint Genome Institute"/>
            <person name="Copeland A."/>
            <person name="Lucas S."/>
            <person name="Lapidus A."/>
            <person name="Glavina del Rio T."/>
            <person name="Dalin E."/>
            <person name="Tice H."/>
            <person name="Bruce D."/>
            <person name="Goodwin L."/>
            <person name="Pitluck S."/>
            <person name="Sims D."/>
            <person name="Brettin T."/>
            <person name="Detter J.C."/>
            <person name="Han C."/>
            <person name="Kuske C.R."/>
            <person name="Schmutz J."/>
            <person name="Larimer F."/>
            <person name="Land M."/>
            <person name="Hauser L."/>
            <person name="Kyrpides N."/>
            <person name="Kim E."/>
            <person name="Zhao J.-S."/>
            <person name="Richardson P."/>
        </authorList>
    </citation>
    <scope>NUCLEOTIDE SEQUENCE [LARGE SCALE GENOMIC DNA]</scope>
    <source>
        <strain>HAW-EB4</strain>
    </source>
</reference>
<gene>
    <name evidence="1" type="primary">fadJ</name>
    <name type="ordered locus">Shal_2670</name>
</gene>